<organism>
    <name type="scientific">Mesorhizobium japonicum (strain LMG 29417 / CECT 9101 / MAFF 303099)</name>
    <name type="common">Mesorhizobium loti (strain MAFF 303099)</name>
    <dbReference type="NCBI Taxonomy" id="266835"/>
    <lineage>
        <taxon>Bacteria</taxon>
        <taxon>Pseudomonadati</taxon>
        <taxon>Pseudomonadota</taxon>
        <taxon>Alphaproteobacteria</taxon>
        <taxon>Hyphomicrobiales</taxon>
        <taxon>Phyllobacteriaceae</taxon>
        <taxon>Mesorhizobium</taxon>
    </lineage>
</organism>
<accession>Q98FM7</accession>
<name>Y3702_RHILO</name>
<sequence>MLYWALVFLVVAIIAGALGFGGIAGTSAGIAQILFFIFLAFLVISLLAGLFRRA</sequence>
<gene>
    <name type="ordered locus">msr3702</name>
</gene>
<evidence type="ECO:0000255" key="1">
    <source>
        <dbReference type="HAMAP-Rule" id="MF_01361"/>
    </source>
</evidence>
<feature type="chain" id="PRO_0000256771" description="UPF0391 membrane protein msr3702">
    <location>
        <begin position="1"/>
        <end position="54"/>
    </location>
</feature>
<feature type="transmembrane region" description="Helical" evidence="1">
    <location>
        <begin position="4"/>
        <end position="24"/>
    </location>
</feature>
<feature type="transmembrane region" description="Helical" evidence="1">
    <location>
        <begin position="30"/>
        <end position="50"/>
    </location>
</feature>
<proteinExistence type="inferred from homology"/>
<protein>
    <recommendedName>
        <fullName evidence="1">UPF0391 membrane protein msr3702</fullName>
    </recommendedName>
</protein>
<keyword id="KW-1003">Cell membrane</keyword>
<keyword id="KW-0472">Membrane</keyword>
<keyword id="KW-0812">Transmembrane</keyword>
<keyword id="KW-1133">Transmembrane helix</keyword>
<dbReference type="EMBL" id="BA000012">
    <property type="protein sequence ID" value="BAB50540.1"/>
    <property type="molecule type" value="Genomic_DNA"/>
</dbReference>
<dbReference type="RefSeq" id="WP_010911886.1">
    <property type="nucleotide sequence ID" value="NC_002678.2"/>
</dbReference>
<dbReference type="KEGG" id="mlo:msr3702"/>
<dbReference type="eggNOG" id="COG5487">
    <property type="taxonomic scope" value="Bacteria"/>
</dbReference>
<dbReference type="HOGENOM" id="CLU_187346_1_0_5"/>
<dbReference type="Proteomes" id="UP000000552">
    <property type="component" value="Chromosome"/>
</dbReference>
<dbReference type="GO" id="GO:0005886">
    <property type="term" value="C:plasma membrane"/>
    <property type="evidence" value="ECO:0007669"/>
    <property type="project" value="UniProtKB-SubCell"/>
</dbReference>
<dbReference type="HAMAP" id="MF_01361">
    <property type="entry name" value="UPF0391"/>
    <property type="match status" value="1"/>
</dbReference>
<dbReference type="InterPro" id="IPR009760">
    <property type="entry name" value="DUF1328"/>
</dbReference>
<dbReference type="NCBIfam" id="NF010226">
    <property type="entry name" value="PRK13682.1-1"/>
    <property type="match status" value="1"/>
</dbReference>
<dbReference type="NCBIfam" id="NF010228">
    <property type="entry name" value="PRK13682.1-3"/>
    <property type="match status" value="1"/>
</dbReference>
<dbReference type="NCBIfam" id="NF010229">
    <property type="entry name" value="PRK13682.1-4"/>
    <property type="match status" value="1"/>
</dbReference>
<dbReference type="Pfam" id="PF07043">
    <property type="entry name" value="DUF1328"/>
    <property type="match status" value="1"/>
</dbReference>
<dbReference type="PIRSF" id="PIRSF036466">
    <property type="entry name" value="UCP036466"/>
    <property type="match status" value="1"/>
</dbReference>
<reference key="1">
    <citation type="journal article" date="2000" name="DNA Res.">
        <title>Complete genome structure of the nitrogen-fixing symbiotic bacterium Mesorhizobium loti.</title>
        <authorList>
            <person name="Kaneko T."/>
            <person name="Nakamura Y."/>
            <person name="Sato S."/>
            <person name="Asamizu E."/>
            <person name="Kato T."/>
            <person name="Sasamoto S."/>
            <person name="Watanabe A."/>
            <person name="Idesawa K."/>
            <person name="Ishikawa A."/>
            <person name="Kawashima K."/>
            <person name="Kimura T."/>
            <person name="Kishida Y."/>
            <person name="Kiyokawa C."/>
            <person name="Kohara M."/>
            <person name="Matsumoto M."/>
            <person name="Matsuno A."/>
            <person name="Mochizuki Y."/>
            <person name="Nakayama S."/>
            <person name="Nakazaki N."/>
            <person name="Shimpo S."/>
            <person name="Sugimoto M."/>
            <person name="Takeuchi C."/>
            <person name="Yamada M."/>
            <person name="Tabata S."/>
        </authorList>
    </citation>
    <scope>NUCLEOTIDE SEQUENCE [LARGE SCALE GENOMIC DNA]</scope>
    <source>
        <strain>LMG 29417 / CECT 9101 / MAFF 303099</strain>
    </source>
</reference>
<comment type="subcellular location">
    <subcellularLocation>
        <location evidence="1">Cell membrane</location>
        <topology evidence="1">Multi-pass membrane protein</topology>
    </subcellularLocation>
</comment>
<comment type="similarity">
    <text evidence="1">Belongs to the UPF0391 family.</text>
</comment>